<feature type="chain" id="PRO_1000115025" description="Small ribosomal subunit protein uS2">
    <location>
        <begin position="1"/>
        <end position="232"/>
    </location>
</feature>
<evidence type="ECO:0000255" key="1">
    <source>
        <dbReference type="HAMAP-Rule" id="MF_00291"/>
    </source>
</evidence>
<evidence type="ECO:0000305" key="2"/>
<reference key="1">
    <citation type="journal article" date="2008" name="J. Bacteriol.">
        <title>The genome of Heliobacterium modesticaldum, a phototrophic representative of the Firmicutes containing the simplest photosynthetic apparatus.</title>
        <authorList>
            <person name="Sattley W.M."/>
            <person name="Madigan M.T."/>
            <person name="Swingley W.D."/>
            <person name="Cheung P.C."/>
            <person name="Clocksin K.M."/>
            <person name="Conrad A.L."/>
            <person name="Dejesa L.C."/>
            <person name="Honchak B.M."/>
            <person name="Jung D.O."/>
            <person name="Karbach L.E."/>
            <person name="Kurdoglu A."/>
            <person name="Lahiri S."/>
            <person name="Mastrian S.D."/>
            <person name="Page L.E."/>
            <person name="Taylor H.L."/>
            <person name="Wang Z.T."/>
            <person name="Raymond J."/>
            <person name="Chen M."/>
            <person name="Blankenship R.E."/>
            <person name="Touchman J.W."/>
        </authorList>
    </citation>
    <scope>NUCLEOTIDE SEQUENCE [LARGE SCALE GENOMIC DNA]</scope>
    <source>
        <strain>ATCC 51547 / Ice1</strain>
    </source>
</reference>
<comment type="similarity">
    <text evidence="1">Belongs to the universal ribosomal protein uS2 family.</text>
</comment>
<gene>
    <name evidence="1" type="primary">rpsB</name>
    <name type="ordered locus">Helmi_21870</name>
    <name type="ORF">HM1_2256</name>
</gene>
<organism>
    <name type="scientific">Heliobacterium modesticaldum (strain ATCC 51547 / Ice1)</name>
    <dbReference type="NCBI Taxonomy" id="498761"/>
    <lineage>
        <taxon>Bacteria</taxon>
        <taxon>Bacillati</taxon>
        <taxon>Bacillota</taxon>
        <taxon>Clostridia</taxon>
        <taxon>Eubacteriales</taxon>
        <taxon>Heliobacteriaceae</taxon>
        <taxon>Heliomicrobium</taxon>
    </lineage>
</organism>
<name>RS2_HELMI</name>
<keyword id="KW-1185">Reference proteome</keyword>
<keyword id="KW-0687">Ribonucleoprotein</keyword>
<keyword id="KW-0689">Ribosomal protein</keyword>
<proteinExistence type="inferred from homology"/>
<protein>
    <recommendedName>
        <fullName evidence="1">Small ribosomal subunit protein uS2</fullName>
    </recommendedName>
    <alternativeName>
        <fullName evidence="2">30S ribosomal protein S2</fullName>
    </alternativeName>
</protein>
<sequence>MAVISMKQLLEAGVHFGHQTRRWNPKMAPYIFTERNGIYIIDLQKTVRKVDEAYNFIREVATQGKKILFVGTKKQAQDSVKEEAERCGMYYVNQRWLGGMLTNFQTIQKRISRLRELEKMEADGTFEVLPKKEVSKLLHEKEKLERFLGGIKDMKELPGAIFVIDPRKERIAVAEARRLGIPLVGIVDTNCDPDEIDYVIPGNDDAIRAVKLLTAKMADAVLEGNQGQSDAQ</sequence>
<accession>B0THD7</accession>
<dbReference type="EMBL" id="CP000930">
    <property type="protein sequence ID" value="ABZ84812.1"/>
    <property type="molecule type" value="Genomic_DNA"/>
</dbReference>
<dbReference type="RefSeq" id="WP_012283311.1">
    <property type="nucleotide sequence ID" value="NC_010337.2"/>
</dbReference>
<dbReference type="SMR" id="B0THD7"/>
<dbReference type="STRING" id="498761.HM1_2256"/>
<dbReference type="KEGG" id="hmo:HM1_2256"/>
<dbReference type="eggNOG" id="COG0052">
    <property type="taxonomic scope" value="Bacteria"/>
</dbReference>
<dbReference type="HOGENOM" id="CLU_040318_1_2_9"/>
<dbReference type="OrthoDB" id="9808036at2"/>
<dbReference type="Proteomes" id="UP000008550">
    <property type="component" value="Chromosome"/>
</dbReference>
<dbReference type="GO" id="GO:0022627">
    <property type="term" value="C:cytosolic small ribosomal subunit"/>
    <property type="evidence" value="ECO:0007669"/>
    <property type="project" value="TreeGrafter"/>
</dbReference>
<dbReference type="GO" id="GO:0003735">
    <property type="term" value="F:structural constituent of ribosome"/>
    <property type="evidence" value="ECO:0007669"/>
    <property type="project" value="InterPro"/>
</dbReference>
<dbReference type="GO" id="GO:0006412">
    <property type="term" value="P:translation"/>
    <property type="evidence" value="ECO:0007669"/>
    <property type="project" value="UniProtKB-UniRule"/>
</dbReference>
<dbReference type="CDD" id="cd01425">
    <property type="entry name" value="RPS2"/>
    <property type="match status" value="1"/>
</dbReference>
<dbReference type="FunFam" id="1.10.287.610:FF:000001">
    <property type="entry name" value="30S ribosomal protein S2"/>
    <property type="match status" value="1"/>
</dbReference>
<dbReference type="Gene3D" id="3.40.50.10490">
    <property type="entry name" value="Glucose-6-phosphate isomerase like protein, domain 1"/>
    <property type="match status" value="1"/>
</dbReference>
<dbReference type="Gene3D" id="1.10.287.610">
    <property type="entry name" value="Helix hairpin bin"/>
    <property type="match status" value="1"/>
</dbReference>
<dbReference type="HAMAP" id="MF_00291_B">
    <property type="entry name" value="Ribosomal_uS2_B"/>
    <property type="match status" value="1"/>
</dbReference>
<dbReference type="InterPro" id="IPR001865">
    <property type="entry name" value="Ribosomal_uS2"/>
</dbReference>
<dbReference type="InterPro" id="IPR005706">
    <property type="entry name" value="Ribosomal_uS2_bac/mit/plastid"/>
</dbReference>
<dbReference type="InterPro" id="IPR018130">
    <property type="entry name" value="Ribosomal_uS2_CS"/>
</dbReference>
<dbReference type="InterPro" id="IPR023591">
    <property type="entry name" value="Ribosomal_uS2_flav_dom_sf"/>
</dbReference>
<dbReference type="NCBIfam" id="TIGR01011">
    <property type="entry name" value="rpsB_bact"/>
    <property type="match status" value="1"/>
</dbReference>
<dbReference type="PANTHER" id="PTHR12534">
    <property type="entry name" value="30S RIBOSOMAL PROTEIN S2 PROKARYOTIC AND ORGANELLAR"/>
    <property type="match status" value="1"/>
</dbReference>
<dbReference type="PANTHER" id="PTHR12534:SF0">
    <property type="entry name" value="SMALL RIBOSOMAL SUBUNIT PROTEIN US2M"/>
    <property type="match status" value="1"/>
</dbReference>
<dbReference type="Pfam" id="PF00318">
    <property type="entry name" value="Ribosomal_S2"/>
    <property type="match status" value="1"/>
</dbReference>
<dbReference type="PRINTS" id="PR00395">
    <property type="entry name" value="RIBOSOMALS2"/>
</dbReference>
<dbReference type="SUPFAM" id="SSF52313">
    <property type="entry name" value="Ribosomal protein S2"/>
    <property type="match status" value="1"/>
</dbReference>
<dbReference type="PROSITE" id="PS00962">
    <property type="entry name" value="RIBOSOMAL_S2_1"/>
    <property type="match status" value="1"/>
</dbReference>
<dbReference type="PROSITE" id="PS00963">
    <property type="entry name" value="RIBOSOMAL_S2_2"/>
    <property type="match status" value="1"/>
</dbReference>